<name>MNME_RICFE</name>
<evidence type="ECO:0000255" key="1">
    <source>
        <dbReference type="HAMAP-Rule" id="MF_00379"/>
    </source>
</evidence>
<proteinExistence type="inferred from homology"/>
<protein>
    <recommendedName>
        <fullName evidence="1">tRNA modification GTPase MnmE</fullName>
        <ecNumber evidence="1">3.6.-.-</ecNumber>
    </recommendedName>
</protein>
<gene>
    <name evidence="1" type="primary">mnmE</name>
    <name evidence="1" type="synonym">trmE</name>
    <name type="ordered locus">RF_1214</name>
</gene>
<accession>Q4UK70</accession>
<reference key="1">
    <citation type="journal article" date="2005" name="PLoS Biol.">
        <title>The genome sequence of Rickettsia felis identifies the first putative conjugative plasmid in an obligate intracellular parasite.</title>
        <authorList>
            <person name="Ogata H."/>
            <person name="Renesto P."/>
            <person name="Audic S."/>
            <person name="Robert C."/>
            <person name="Blanc G."/>
            <person name="Fournier P.-E."/>
            <person name="Parinello H."/>
            <person name="Claverie J.-M."/>
            <person name="Raoult D."/>
        </authorList>
    </citation>
    <scope>NUCLEOTIDE SEQUENCE [LARGE SCALE GENOMIC DNA]</scope>
    <source>
        <strain>ATCC VR-1525 / URRWXCal2</strain>
    </source>
</reference>
<keyword id="KW-0963">Cytoplasm</keyword>
<keyword id="KW-0342">GTP-binding</keyword>
<keyword id="KW-0378">Hydrolase</keyword>
<keyword id="KW-0460">Magnesium</keyword>
<keyword id="KW-0479">Metal-binding</keyword>
<keyword id="KW-0547">Nucleotide-binding</keyword>
<keyword id="KW-0630">Potassium</keyword>
<keyword id="KW-0819">tRNA processing</keyword>
<organism>
    <name type="scientific">Rickettsia felis (strain ATCC VR-1525 / URRWXCal2)</name>
    <name type="common">Rickettsia azadi</name>
    <dbReference type="NCBI Taxonomy" id="315456"/>
    <lineage>
        <taxon>Bacteria</taxon>
        <taxon>Pseudomonadati</taxon>
        <taxon>Pseudomonadota</taxon>
        <taxon>Alphaproteobacteria</taxon>
        <taxon>Rickettsiales</taxon>
        <taxon>Rickettsiaceae</taxon>
        <taxon>Rickettsieae</taxon>
        <taxon>Rickettsia</taxon>
        <taxon>spotted fever group</taxon>
    </lineage>
</organism>
<feature type="chain" id="PRO_0000277959" description="tRNA modification GTPase MnmE">
    <location>
        <begin position="1"/>
        <end position="480"/>
    </location>
</feature>
<feature type="domain" description="TrmE-type G">
    <location>
        <begin position="250"/>
        <end position="406"/>
    </location>
</feature>
<feature type="binding site" evidence="1">
    <location>
        <position position="20"/>
    </location>
    <ligand>
        <name>(6S)-5-formyl-5,6,7,8-tetrahydrofolate</name>
        <dbReference type="ChEBI" id="CHEBI:57457"/>
    </ligand>
</feature>
<feature type="binding site" evidence="1">
    <location>
        <position position="114"/>
    </location>
    <ligand>
        <name>(6S)-5-formyl-5,6,7,8-tetrahydrofolate</name>
        <dbReference type="ChEBI" id="CHEBI:57457"/>
    </ligand>
</feature>
<feature type="binding site" evidence="1">
    <location>
        <position position="154"/>
    </location>
    <ligand>
        <name>(6S)-5-formyl-5,6,7,8-tetrahydrofolate</name>
        <dbReference type="ChEBI" id="CHEBI:57457"/>
    </ligand>
</feature>
<feature type="binding site" evidence="1">
    <location>
        <begin position="260"/>
        <end position="265"/>
    </location>
    <ligand>
        <name>GTP</name>
        <dbReference type="ChEBI" id="CHEBI:37565"/>
    </ligand>
</feature>
<feature type="binding site" evidence="1">
    <location>
        <position position="260"/>
    </location>
    <ligand>
        <name>K(+)</name>
        <dbReference type="ChEBI" id="CHEBI:29103"/>
    </ligand>
</feature>
<feature type="binding site" evidence="1">
    <location>
        <position position="264"/>
    </location>
    <ligand>
        <name>Mg(2+)</name>
        <dbReference type="ChEBI" id="CHEBI:18420"/>
    </ligand>
</feature>
<feature type="binding site" evidence="1">
    <location>
        <begin position="279"/>
        <end position="285"/>
    </location>
    <ligand>
        <name>GTP</name>
        <dbReference type="ChEBI" id="CHEBI:37565"/>
    </ligand>
</feature>
<feature type="binding site" evidence="1">
    <location>
        <position position="279"/>
    </location>
    <ligand>
        <name>K(+)</name>
        <dbReference type="ChEBI" id="CHEBI:29103"/>
    </ligand>
</feature>
<feature type="binding site" evidence="1">
    <location>
        <position position="281"/>
    </location>
    <ligand>
        <name>K(+)</name>
        <dbReference type="ChEBI" id="CHEBI:29103"/>
    </ligand>
</feature>
<feature type="binding site" evidence="1">
    <location>
        <position position="284"/>
    </location>
    <ligand>
        <name>K(+)</name>
        <dbReference type="ChEBI" id="CHEBI:29103"/>
    </ligand>
</feature>
<feature type="binding site" evidence="1">
    <location>
        <position position="285"/>
    </location>
    <ligand>
        <name>Mg(2+)</name>
        <dbReference type="ChEBI" id="CHEBI:18420"/>
    </ligand>
</feature>
<feature type="binding site" evidence="1">
    <location>
        <begin position="304"/>
        <end position="307"/>
    </location>
    <ligand>
        <name>GTP</name>
        <dbReference type="ChEBI" id="CHEBI:37565"/>
    </ligand>
</feature>
<feature type="binding site" evidence="1">
    <location>
        <position position="480"/>
    </location>
    <ligand>
        <name>(6S)-5-formyl-5,6,7,8-tetrahydrofolate</name>
        <dbReference type="ChEBI" id="CHEBI:57457"/>
    </ligand>
</feature>
<sequence length="480" mass="53429">METIFAQSSAFGKAGVAVFRISGPKSLEVLQLLTGRADFKPRIMYYQQITVPKTIVNSASFAYKEPRVEPITNRRATSDIVSEGGSIDYKELIDNAMVVYFKSPNSFTGEDVVEIHTHGSKAISIMLINALLNIADIRLAEAGEFTKRAFLNNKFDLTAAEGIADLINAETIMQHRQAIRQASGGLEELYNNWRTQLLKIISLLEAYIDFPDEDIPDSVLNDVNNTHKNLVNEISNYLNDNRRGELLNSGLKLAIIGPPNVGKSSLLNFLMQRDIAIVSNIAGTTRDIIEGHLDIGGYPIILQDTAGIREESSDIIEQEGIKRAIHSAKTADIKIIMFDAEKLDSSINEDIMNLINENTITIINKIDLIEPNKIFSIENKYKCLRVSVKNNIALSSILKNIENIAENMAGFTETPYITNQRHRHYLKQALSHLTAFSLDNDLVLATEDIRMTARCIGAITGVINIEEILGEIFKNFCIGK</sequence>
<dbReference type="EC" id="3.6.-.-" evidence="1"/>
<dbReference type="EMBL" id="CP000053">
    <property type="protein sequence ID" value="AAY62065.1"/>
    <property type="molecule type" value="Genomic_DNA"/>
</dbReference>
<dbReference type="SMR" id="Q4UK70"/>
<dbReference type="STRING" id="315456.RF_1214"/>
<dbReference type="KEGG" id="rfe:RF_1214"/>
<dbReference type="eggNOG" id="COG0486">
    <property type="taxonomic scope" value="Bacteria"/>
</dbReference>
<dbReference type="HOGENOM" id="CLU_019624_3_1_5"/>
<dbReference type="OrthoDB" id="9805918at2"/>
<dbReference type="Proteomes" id="UP000008548">
    <property type="component" value="Chromosome"/>
</dbReference>
<dbReference type="GO" id="GO:0005737">
    <property type="term" value="C:cytoplasm"/>
    <property type="evidence" value="ECO:0007669"/>
    <property type="project" value="UniProtKB-SubCell"/>
</dbReference>
<dbReference type="GO" id="GO:0005525">
    <property type="term" value="F:GTP binding"/>
    <property type="evidence" value="ECO:0007669"/>
    <property type="project" value="UniProtKB-UniRule"/>
</dbReference>
<dbReference type="GO" id="GO:0003924">
    <property type="term" value="F:GTPase activity"/>
    <property type="evidence" value="ECO:0007669"/>
    <property type="project" value="UniProtKB-UniRule"/>
</dbReference>
<dbReference type="GO" id="GO:0046872">
    <property type="term" value="F:metal ion binding"/>
    <property type="evidence" value="ECO:0007669"/>
    <property type="project" value="UniProtKB-KW"/>
</dbReference>
<dbReference type="GO" id="GO:0030488">
    <property type="term" value="P:tRNA methylation"/>
    <property type="evidence" value="ECO:0007669"/>
    <property type="project" value="TreeGrafter"/>
</dbReference>
<dbReference type="GO" id="GO:0002098">
    <property type="term" value="P:tRNA wobble uridine modification"/>
    <property type="evidence" value="ECO:0007669"/>
    <property type="project" value="TreeGrafter"/>
</dbReference>
<dbReference type="CDD" id="cd04164">
    <property type="entry name" value="trmE"/>
    <property type="match status" value="1"/>
</dbReference>
<dbReference type="CDD" id="cd14858">
    <property type="entry name" value="TrmE_N"/>
    <property type="match status" value="1"/>
</dbReference>
<dbReference type="Gene3D" id="3.40.50.300">
    <property type="entry name" value="P-loop containing nucleotide triphosphate hydrolases"/>
    <property type="match status" value="1"/>
</dbReference>
<dbReference type="Gene3D" id="3.30.1360.120">
    <property type="entry name" value="Probable tRNA modification gtpase trme, domain 1"/>
    <property type="match status" value="1"/>
</dbReference>
<dbReference type="Gene3D" id="1.20.120.430">
    <property type="entry name" value="tRNA modification GTPase MnmE domain 2"/>
    <property type="match status" value="1"/>
</dbReference>
<dbReference type="HAMAP" id="MF_00379">
    <property type="entry name" value="GTPase_MnmE"/>
    <property type="match status" value="1"/>
</dbReference>
<dbReference type="InterPro" id="IPR031168">
    <property type="entry name" value="G_TrmE"/>
</dbReference>
<dbReference type="InterPro" id="IPR006073">
    <property type="entry name" value="GTP-bd"/>
</dbReference>
<dbReference type="InterPro" id="IPR018948">
    <property type="entry name" value="GTP-bd_TrmE_N"/>
</dbReference>
<dbReference type="InterPro" id="IPR004520">
    <property type="entry name" value="GTPase_MnmE"/>
</dbReference>
<dbReference type="InterPro" id="IPR008144">
    <property type="entry name" value="Guanylate_kin-like_dom"/>
</dbReference>
<dbReference type="InterPro" id="IPR027368">
    <property type="entry name" value="MnmE_dom2"/>
</dbReference>
<dbReference type="InterPro" id="IPR025867">
    <property type="entry name" value="MnmE_helical"/>
</dbReference>
<dbReference type="InterPro" id="IPR027417">
    <property type="entry name" value="P-loop_NTPase"/>
</dbReference>
<dbReference type="InterPro" id="IPR022436">
    <property type="entry name" value="RPE2"/>
</dbReference>
<dbReference type="InterPro" id="IPR005225">
    <property type="entry name" value="Small_GTP-bd"/>
</dbReference>
<dbReference type="InterPro" id="IPR027266">
    <property type="entry name" value="TrmE/GcvT_dom1"/>
</dbReference>
<dbReference type="NCBIfam" id="TIGR00450">
    <property type="entry name" value="mnmE_trmE_thdF"/>
    <property type="match status" value="1"/>
</dbReference>
<dbReference type="NCBIfam" id="NF003661">
    <property type="entry name" value="PRK05291.1-3"/>
    <property type="match status" value="1"/>
</dbReference>
<dbReference type="NCBIfam" id="TIGR03774">
    <property type="entry name" value="RPE2"/>
    <property type="match status" value="1"/>
</dbReference>
<dbReference type="NCBIfam" id="TIGR00231">
    <property type="entry name" value="small_GTP"/>
    <property type="match status" value="1"/>
</dbReference>
<dbReference type="PANTHER" id="PTHR42714">
    <property type="entry name" value="TRNA MODIFICATION GTPASE GTPBP3"/>
    <property type="match status" value="1"/>
</dbReference>
<dbReference type="PANTHER" id="PTHR42714:SF2">
    <property type="entry name" value="TRNA MODIFICATION GTPASE GTPBP3, MITOCHONDRIAL"/>
    <property type="match status" value="1"/>
</dbReference>
<dbReference type="Pfam" id="PF01926">
    <property type="entry name" value="MMR_HSR1"/>
    <property type="match status" value="1"/>
</dbReference>
<dbReference type="Pfam" id="PF12631">
    <property type="entry name" value="MnmE_helical"/>
    <property type="match status" value="1"/>
</dbReference>
<dbReference type="Pfam" id="PF10396">
    <property type="entry name" value="TrmE_N"/>
    <property type="match status" value="1"/>
</dbReference>
<dbReference type="SUPFAM" id="SSF103025">
    <property type="entry name" value="Folate-binding domain"/>
    <property type="match status" value="1"/>
</dbReference>
<dbReference type="SUPFAM" id="SSF52540">
    <property type="entry name" value="P-loop containing nucleoside triphosphate hydrolases"/>
    <property type="match status" value="1"/>
</dbReference>
<dbReference type="PROSITE" id="PS51709">
    <property type="entry name" value="G_TRME"/>
    <property type="match status" value="1"/>
</dbReference>
<comment type="function">
    <text evidence="1">Exhibits a very high intrinsic GTPase hydrolysis rate. Involved in the addition of a carboxymethylaminomethyl (cmnm) group at the wobble position (U34) of certain tRNAs, forming tRNA-cmnm(5)s(2)U34.</text>
</comment>
<comment type="cofactor">
    <cofactor evidence="1">
        <name>K(+)</name>
        <dbReference type="ChEBI" id="CHEBI:29103"/>
    </cofactor>
    <text evidence="1">Binds 1 potassium ion per subunit.</text>
</comment>
<comment type="subunit">
    <text evidence="1">Homodimer. Heterotetramer of two MnmE and two MnmG subunits.</text>
</comment>
<comment type="subcellular location">
    <subcellularLocation>
        <location evidence="1">Cytoplasm</location>
    </subcellularLocation>
</comment>
<comment type="similarity">
    <text evidence="1">Belongs to the TRAFAC class TrmE-Era-EngA-EngB-Septin-like GTPase superfamily. TrmE GTPase family.</text>
</comment>